<protein>
    <recommendedName>
        <fullName evidence="10">Citrate transporter CitP</fullName>
    </recommendedName>
    <alternativeName>
        <fullName evidence="9">Citrate carrier</fullName>
    </alternativeName>
    <alternativeName>
        <fullName evidence="11">Citrate/lactate antiporter</fullName>
    </alternativeName>
</protein>
<gene>
    <name evidence="9" type="primary">citP</name>
</gene>
<dbReference type="EMBL" id="L29572">
    <property type="protein sequence ID" value="AAA60396.1"/>
    <property type="molecule type" value="Genomic_DNA"/>
</dbReference>
<dbReference type="SMR" id="Q48769"/>
<dbReference type="TCDB" id="2.A.24.3.2">
    <property type="family name" value="the 2-hydroxycarboxylate transporter (2-hct) family"/>
</dbReference>
<dbReference type="GO" id="GO:0005886">
    <property type="term" value="C:plasma membrane"/>
    <property type="evidence" value="ECO:0007669"/>
    <property type="project" value="UniProtKB-SubCell"/>
</dbReference>
<dbReference type="GO" id="GO:0015297">
    <property type="term" value="F:antiporter activity"/>
    <property type="evidence" value="ECO:0007669"/>
    <property type="project" value="UniProtKB-KW"/>
</dbReference>
<dbReference type="GO" id="GO:0008514">
    <property type="term" value="F:organic anion transmembrane transporter activity"/>
    <property type="evidence" value="ECO:0007669"/>
    <property type="project" value="InterPro"/>
</dbReference>
<dbReference type="GO" id="GO:0015293">
    <property type="term" value="F:symporter activity"/>
    <property type="evidence" value="ECO:0007669"/>
    <property type="project" value="UniProtKB-KW"/>
</dbReference>
<dbReference type="GO" id="GO:0006101">
    <property type="term" value="P:citrate metabolic process"/>
    <property type="evidence" value="ECO:0007669"/>
    <property type="project" value="UniProtKB-KW"/>
</dbReference>
<dbReference type="InterPro" id="IPR018025">
    <property type="entry name" value="2-OHcarbox_trans_Prot/Firm"/>
</dbReference>
<dbReference type="InterPro" id="IPR004679">
    <property type="entry name" value="2-OHcarboxylate_transport"/>
</dbReference>
<dbReference type="NCBIfam" id="TIGR00783">
    <property type="entry name" value="ccs"/>
    <property type="match status" value="1"/>
</dbReference>
<dbReference type="PANTHER" id="PTHR40033:SF1">
    <property type="entry name" value="CITRATE-SODIUM SYMPORTER"/>
    <property type="match status" value="1"/>
</dbReference>
<dbReference type="PANTHER" id="PTHR40033">
    <property type="entry name" value="NA(+)-MALATE SYMPORTER"/>
    <property type="match status" value="1"/>
</dbReference>
<dbReference type="Pfam" id="PF03390">
    <property type="entry name" value="2HCT"/>
    <property type="match status" value="1"/>
</dbReference>
<dbReference type="PIRSF" id="PIRSF005348">
    <property type="entry name" value="YxkH"/>
    <property type="match status" value="1"/>
</dbReference>
<dbReference type="PRINTS" id="PR00303">
    <property type="entry name" value="SECYTRNLCASE"/>
</dbReference>
<organism>
    <name type="scientific">Leuconostoc mesenteroides subsp. mesenteroides</name>
    <dbReference type="NCBI Taxonomy" id="33967"/>
    <lineage>
        <taxon>Bacteria</taxon>
        <taxon>Bacillati</taxon>
        <taxon>Bacillota</taxon>
        <taxon>Bacilli</taxon>
        <taxon>Lactobacillales</taxon>
        <taxon>Lactobacillaceae</taxon>
        <taxon>Leuconostoc</taxon>
    </lineage>
</organism>
<sequence length="443" mass="46760">MMNHPHSSHIGTTNVKEEIGKLDRIRISGIGLVRYAFMAVLLIIAISTKTLPNTMIGAIFALVLMGHVFYYLGAHLPIFRSYLGGGSVFTILLTAILVATNVMPKYVVTTASGFINGMDFLGLYIVSLIASSLFKMDRKMLLKAAVRFLPVAFISMALTAVVIGIVGVIIGVGFNYAILYIAMPIMAGGVGAGIVPLSGIYAHAMGVGSAGILSKLFPTVILGNLLAIISAGLISRIFKDSKGNGHGEILRGEREDAAAAAEEIKPDYVQLGVGLIIAVMFFMIGTMLNKVFPGINAYAFIILSIVLTKAFGLLPKYYEDSVIMFGQVIVKNMTHALLAGVGLSLLDMHVLLAALSWQFVVLCLVSIVAISLISATLGKLFGLYPVEAAITAGLANNSMGGTGNVAVLAASERMNLIAFAQMGNRIGGALILVVAGILVTFMK</sequence>
<reference key="1">
    <citation type="journal article" date="1998" name="Appl. Environ. Microbiol.">
        <title>Mechanism of the citrate transporters in carbohydrate and citrate cometabolism in Lactococcus and Leuconostoc species.</title>
        <authorList>
            <person name="Bandell M."/>
            <person name="Lhotte M.E."/>
            <person name="Marty-Teysset C."/>
            <person name="Veyrat A."/>
            <person name="Prevost H."/>
            <person name="Dartois V."/>
            <person name="Divies C."/>
            <person name="Konings W.N."/>
            <person name="Lolkema J.S."/>
        </authorList>
    </citation>
    <scope>NUCLEOTIDE SEQUENCE [GENOMIC DNA]</scope>
    <scope>FUNCTION</scope>
    <scope>TRANSPORTER ACTIVITY</scope>
    <scope>SUBCELLULAR LOCATION</scope>
    <source>
        <strain>19D</strain>
    </source>
</reference>
<reference key="2">
    <citation type="journal article" date="1995" name="J. Biol. Chem.">
        <title>Membrane potential-generating transport of citrate and malate catalyzed by CitP of Leuconostoc mesenteroides.</title>
        <authorList>
            <person name="Marty-Teysset C."/>
            <person name="Lolkema J.S."/>
            <person name="Schmitt P."/>
            <person name="Divies C."/>
            <person name="Konings W.N."/>
        </authorList>
    </citation>
    <scope>FUNCTION</scope>
    <scope>TRANSPORTER ACTIVITY</scope>
    <scope>ACTIVITY REGULATION</scope>
    <scope>BIOPHYSICOCHEMICAL PROPERTIES</scope>
    <scope>SUBCELLULAR LOCATION</scope>
    <scope>INDUCTION</scope>
    <source>
        <strain>19D</strain>
    </source>
</reference>
<reference key="3">
    <citation type="journal article" date="1996" name="J. Bacteriol.">
        <title>Proton motive force generation by citrolactic fermentation in Leuconostoc mesenteroides.</title>
        <authorList>
            <person name="Marty-Teysset C."/>
            <person name="Posthuma C."/>
            <person name="Lolkema J.S."/>
            <person name="Schmitt P."/>
            <person name="Divies C."/>
            <person name="Konings W.N."/>
        </authorList>
    </citation>
    <scope>FUNCTION</scope>
    <scope>TRANSPORTER ACTIVITY</scope>
    <source>
        <strain>19D</strain>
    </source>
</reference>
<reference key="4">
    <citation type="journal article" date="1997" name="J. Biol. Chem.">
        <title>Membrane potential-generating malate (MleP) and citrate (CitP) transporters of lactic acid bacteria are homologous proteins. Substrate specificity of the 2-hydroxycarboxylate transporter family.</title>
        <authorList>
            <person name="Bandell M."/>
            <person name="Ansanay V."/>
            <person name="Rachidi N."/>
            <person name="Dequin S."/>
            <person name="Lolkema J.S."/>
        </authorList>
    </citation>
    <scope>FUNCTION</scope>
    <scope>SUBSTRATE SPECIFICITY</scope>
    <source>
        <strain>19D</strain>
    </source>
</reference>
<reference key="5">
    <citation type="journal article" date="1999" name="Biochemistry">
        <title>Stereoselectivity of the membrane potential-generating citrate and malate transporters of lactic acid bacteria.</title>
        <authorList>
            <person name="Bandell M."/>
            <person name="Lolkema J.S."/>
        </authorList>
    </citation>
    <scope>FUNCTION</scope>
    <scope>SUBSTRATE SPECIFICITY</scope>
    <scope>BIOPHYSICOCHEMICAL PROPERTIES</scope>
    <source>
        <strain>19D</strain>
    </source>
</reference>
<reference key="6">
    <citation type="journal article" date="2000" name="J. Biol. Chem.">
        <title>Arg-425 of the citrate transporter CitP is responsible for high affinity binding of di- and tricarboxylates.</title>
        <authorList>
            <person name="Bandell M."/>
            <person name="Lolkema J.S."/>
        </authorList>
    </citation>
    <scope>BIOPHYSICOCHEMICAL PROPERTIES</scope>
    <scope>MUTAGENESIS OF ARG-425</scope>
</reference>
<reference key="7">
    <citation type="journal article" date="2000" name="Biochemistry">
        <title>The conserved C-terminus of the citrate (CitP) and malate (MleP) transporters of lactic acid bacteria is involved in substrate recognition.</title>
        <authorList>
            <person name="Bandell M."/>
            <person name="Lolkema J.S."/>
        </authorList>
    </citation>
    <scope>BIOPHYSICOCHEMICAL PROPERTIES</scope>
    <scope>DOMAIN</scope>
</reference>
<keyword id="KW-0050">Antiport</keyword>
<keyword id="KW-1003">Cell membrane</keyword>
<keyword id="KW-0163">Citrate utilization</keyword>
<keyword id="KW-0472">Membrane</keyword>
<keyword id="KW-0769">Symport</keyword>
<keyword id="KW-0812">Transmembrane</keyword>
<keyword id="KW-1133">Transmembrane helix</keyword>
<keyword id="KW-0813">Transport</keyword>
<feature type="chain" id="PRO_0000460554" description="Citrate transporter CitP">
    <location>
        <begin position="1"/>
        <end position="443"/>
    </location>
</feature>
<feature type="transmembrane region" description="Helical" evidence="1">
    <location>
        <begin position="27"/>
        <end position="47"/>
    </location>
</feature>
<feature type="transmembrane region" description="Helical" evidence="1">
    <location>
        <begin position="59"/>
        <end position="79"/>
    </location>
</feature>
<feature type="transmembrane region" description="Helical" evidence="1">
    <location>
        <begin position="83"/>
        <end position="103"/>
    </location>
</feature>
<feature type="transmembrane region" description="Helical" evidence="1">
    <location>
        <begin position="114"/>
        <end position="134"/>
    </location>
</feature>
<feature type="transmembrane region" description="Helical" evidence="1">
    <location>
        <begin position="151"/>
        <end position="171"/>
    </location>
</feature>
<feature type="transmembrane region" description="Helical" evidence="1">
    <location>
        <begin position="177"/>
        <end position="197"/>
    </location>
</feature>
<feature type="transmembrane region" description="Helical" evidence="1">
    <location>
        <begin position="209"/>
        <end position="229"/>
    </location>
</feature>
<feature type="transmembrane region" description="Helical" evidence="1">
    <location>
        <begin position="268"/>
        <end position="288"/>
    </location>
</feature>
<feature type="transmembrane region" description="Helical" evidence="1">
    <location>
        <begin position="294"/>
        <end position="314"/>
    </location>
</feature>
<feature type="transmembrane region" description="Helical" evidence="1">
    <location>
        <begin position="322"/>
        <end position="342"/>
    </location>
</feature>
<feature type="transmembrane region" description="Helical" evidence="1">
    <location>
        <begin position="350"/>
        <end position="370"/>
    </location>
</feature>
<feature type="transmembrane region" description="Helical" evidence="1">
    <location>
        <begin position="388"/>
        <end position="410"/>
    </location>
</feature>
<feature type="transmembrane region" description="Helical" evidence="1">
    <location>
        <begin position="422"/>
        <end position="442"/>
    </location>
</feature>
<feature type="site" description="Plays an important role in the generation of the membrane potential" evidence="12">
    <location>
        <position position="425"/>
    </location>
</feature>
<feature type="mutagenesis site" description="Exchange is severely affected with (S)-malate as substrate. Affinity for divalent (S)-malate is strongly decreased. 20-fold increase in affinity for monovalent 2-hydroxyisobutyrate. Chemical modification of the mutant with the sulfhydryl reagent 2-aminoethyl methanethiosulfonate, which restores the positive charge at position 425, can largely restore exchange activity." evidence="3">
    <original>R</original>
    <variation>C</variation>
    <location>
        <position position="425"/>
    </location>
</feature>
<feature type="mutagenesis site" description="10-fold decrease in affinity for divalent (S)-malate. 4-fold increase in affinity for monovalent 2-hydroxyisobutyrate." evidence="3">
    <original>R</original>
    <variation>K</variation>
    <location>
        <position position="425"/>
    </location>
</feature>
<name>CITP_LEUMS</name>
<proteinExistence type="evidence at protein level"/>
<evidence type="ECO:0000255" key="1"/>
<evidence type="ECO:0000269" key="2">
    <source>
    </source>
</evidence>
<evidence type="ECO:0000269" key="3">
    <source>
    </source>
</evidence>
<evidence type="ECO:0000269" key="4">
    <source>
    </source>
</evidence>
<evidence type="ECO:0000269" key="5">
    <source>
    </source>
</evidence>
<evidence type="ECO:0000269" key="6">
    <source>
    </source>
</evidence>
<evidence type="ECO:0000269" key="7">
    <source>
    </source>
</evidence>
<evidence type="ECO:0000269" key="8">
    <source>
    </source>
</evidence>
<evidence type="ECO:0000303" key="9">
    <source>
    </source>
</evidence>
<evidence type="ECO:0000303" key="10">
    <source>
    </source>
</evidence>
<evidence type="ECO:0000305" key="11"/>
<evidence type="ECO:0000305" key="12">
    <source>
    </source>
</evidence>
<accession>Q48769</accession>
<comment type="function">
    <text evidence="2 5 6 7 8">Secondary transporter involved in citrate metabolism (PubMed:7592702, PubMed:8636016, PubMed:9572922). During cometabolism of citrate and glucose, catalyzes the uptake of divalent citrate into the cell coupled to the exit of monovalent lactate, a product of citrate fermentation during citrate-glucose cometabolism (precursor/product exchange) (PubMed:7592702, PubMed:8636016, PubMed:9572922). The citrate/lactate exchange is electrogenic and results in the generation of a membrane potential (PubMed:7592702, PubMed:8636016, PubMed:9572922). In the absence of glucose, i.e. when no lactate is produced, CitP catalyzes the proton-dependent transport of citrate and malate (PubMed:7592702). Transports the divalent form of citrate and malate with the concomitant uptake of one proton, therefore translocating a single unit of negative charge across the membrane (PubMed:7592702). In vitro, transports a range of substrates that contain the 2-hydroxycarboxylate motif, HO-CR(2)-COO(-), with a preference for malate, citrate and monovalent 2-hydroxyisobutyrate (PubMed:10441129, PubMed:9218448). Modification of the OH or the COO(-) groups of the 2-hydroxycarboxylate motif drastically reduces the affinity of the transporter for the substrates, indicating their relevance in substrate recognition (PubMed:10441129). Significant activity is also observed with some 2-oxocarboxylates and a 3-hydroxycarboxylate (PubMed:9218448).</text>
</comment>
<comment type="catalytic activity">
    <reaction evidence="5 6 8">
        <text>(R)-lactate(in) + citrate(out) = (R)-lactate(out) + citrate(in)</text>
        <dbReference type="Rhea" id="RHEA:79491"/>
        <dbReference type="ChEBI" id="CHEBI:16004"/>
        <dbReference type="ChEBI" id="CHEBI:16947"/>
    </reaction>
    <physiologicalReaction direction="left-to-right" evidence="5 6 8">
        <dbReference type="Rhea" id="RHEA:79492"/>
    </physiologicalReaction>
</comment>
<comment type="catalytic activity">
    <reaction evidence="5">
        <text>(S)-lactate(in) + citrate(out) = (S)-lactate(out) + citrate(in)</text>
        <dbReference type="Rhea" id="RHEA:79487"/>
        <dbReference type="ChEBI" id="CHEBI:16651"/>
        <dbReference type="ChEBI" id="CHEBI:16947"/>
    </reaction>
    <physiologicalReaction direction="left-to-right" evidence="5">
        <dbReference type="Rhea" id="RHEA:79488"/>
    </physiologicalReaction>
</comment>
<comment type="catalytic activity">
    <reaction evidence="5">
        <text>citrate(in) + H(+)(in) = citrate(out) + H(+)(out)</text>
        <dbReference type="Rhea" id="RHEA:32123"/>
        <dbReference type="ChEBI" id="CHEBI:15378"/>
        <dbReference type="ChEBI" id="CHEBI:16947"/>
    </reaction>
    <physiologicalReaction direction="right-to-left" evidence="5">
        <dbReference type="Rhea" id="RHEA:32125"/>
    </physiologicalReaction>
</comment>
<comment type="activity regulation">
    <text evidence="5">Uptake of citrate is not affected by the absence or presence of Na(+) up to 25 mM and is increasingly inhibited by increasing Mg(2+) concentrations.</text>
</comment>
<comment type="biophysicochemical properties">
    <kinetics>
        <KM evidence="5">42 uM for total citrate (at pH 5)</KM>
        <KM evidence="5">13.8 uM for total citrate (at pH 5.5)</KM>
        <KM evidence="5">18.2 uM for total citrate (at pH 6)</KM>
        <KM evidence="5">47.2 uM for total citrate (at pH 6.5)</KM>
        <KM evidence="5">25 uM for divalent citrate (at pH 5)</KM>
        <KM evidence="5">10.4 uM for divalent citrate (at pH 5.5)</KM>
        <KM evidence="5">12.5 uM for divalent citrate (at pH 6)</KM>
        <KM evidence="5">20.7 uM for divalent citrate (at pH 6.5)</KM>
        <KM evidence="2">25 mM for (S)-lactate</KM>
        <KM evidence="2">32 mM for (R)-lactate</KM>
        <KM evidence="2 4">0.1 mM for (S)-malate</KM>
        <KM evidence="3">0.09 mM for (S)-malate</KM>
        <KM evidence="3">4.9 mM for 2-hydroxyisobutyrate</KM>
        <KM evidence="4">7 mM for (R)-mandelate</KM>
        <KM evidence="4">12.5 mM for (R)-2-hydroxyisovalerate</KM>
        <Vmax evidence="5">52.4 nmol/min/mg enzyme with citrate as substrate (at pH 5)</Vmax>
        <Vmax evidence="5">38.8 nmol/min/mg enzyme with citrate as substrate (at pH 5.5)</Vmax>
        <Vmax evidence="5">36.7 nmol/min/mg enzyme with citrate as substrate (at pH 6)</Vmax>
        <Vmax evidence="5">36.8 nmol/min/mg enzyme with citrate as substrate (at pH 6.5)</Vmax>
    </kinetics>
</comment>
<comment type="subcellular location">
    <subcellularLocation>
        <location evidence="5 8">Cell membrane</location>
        <topology evidence="1">Multi-pass membrane protein</topology>
    </subcellularLocation>
</comment>
<comment type="induction">
    <text evidence="5">Induced by the presence of citrate in the medium.</text>
</comment>
<comment type="domain">
    <text evidence="4">The 46 C-terminal residues contain structural elements that interact with the R groups of the substrates (PubMed:11041872). Interchanging the 46 C-terminal amino acid residues of CitP and MleP alters neither the specificity nor the affinity for the di- and tricarboxylates malate and citrate (PubMed:11041872). In contrast, changes in substrate specificity are observed with monocarboxylates (PubMed:11041872).</text>
</comment>
<comment type="similarity">
    <text evidence="11">Belongs to the 2-hydroxycarboxylate transporter (2-HCT) (TC 2.A.24) family.</text>
</comment>